<sequence length="460" mass="51056">MLKEYRTVTEVVGPLMAVEGVEGVKYDELVEIEMQTGELRRGKVLEVNGDKAMVQLFEGSAGINLKNTKVRFLGRPLEIGVSEDMLGRVFDGMGRPKDNGPNIIPEKRLDINGEAINPVARNYPSEFIQTGISAIDGLNTLVRGQKLPVFSGSGLPHKELAAQIARQAKVLNSDSKFAVVFAAIGITFEEAEFFVDEFTKTGAIDRSVLFMNLASDPAIERIATPRMALTTAEYLAYEKGMHVLVIMTDITNYCEALREVSAARKEVPGRRGYPGYLYTDLSTLYERAGRLVGKEGSITQIPILTMPEDDKTHPIPDLTGYITEGQIILSRELYKKGIMPPIDVLPSLSRLKDKGIGKGKTREDHADTMNQLFSAYAQGKQAKELAAILGESALSDVDKAYAKFAEAFENEYVSQGFTTNRTIEETLNLGWKLLKILPRTELKRIRDEYLEKYMPVGEDE</sequence>
<dbReference type="EMBL" id="CP000246">
    <property type="protein sequence ID" value="ABG83271.1"/>
    <property type="molecule type" value="Genomic_DNA"/>
</dbReference>
<dbReference type="RefSeq" id="WP_003449785.1">
    <property type="nucleotide sequence ID" value="NC_008261.1"/>
</dbReference>
<dbReference type="SMR" id="Q0TPW8"/>
<dbReference type="STRING" id="195103.CPF_1889"/>
<dbReference type="PaxDb" id="195103-CPF_1889"/>
<dbReference type="KEGG" id="cpf:CPF_1889"/>
<dbReference type="eggNOG" id="COG1156">
    <property type="taxonomic scope" value="Bacteria"/>
</dbReference>
<dbReference type="HOGENOM" id="CLU_022916_0_0_9"/>
<dbReference type="Proteomes" id="UP000001823">
    <property type="component" value="Chromosome"/>
</dbReference>
<dbReference type="GO" id="GO:0005524">
    <property type="term" value="F:ATP binding"/>
    <property type="evidence" value="ECO:0007669"/>
    <property type="project" value="UniProtKB-UniRule"/>
</dbReference>
<dbReference type="GO" id="GO:0046933">
    <property type="term" value="F:proton-transporting ATP synthase activity, rotational mechanism"/>
    <property type="evidence" value="ECO:0007669"/>
    <property type="project" value="UniProtKB-UniRule"/>
</dbReference>
<dbReference type="GO" id="GO:0042777">
    <property type="term" value="P:proton motive force-driven plasma membrane ATP synthesis"/>
    <property type="evidence" value="ECO:0007669"/>
    <property type="project" value="UniProtKB-UniRule"/>
</dbReference>
<dbReference type="CDD" id="cd18112">
    <property type="entry name" value="ATP-synt_V_A-type_beta_C"/>
    <property type="match status" value="1"/>
</dbReference>
<dbReference type="CDD" id="cd18118">
    <property type="entry name" value="ATP-synt_V_A-type_beta_N"/>
    <property type="match status" value="1"/>
</dbReference>
<dbReference type="CDD" id="cd01135">
    <property type="entry name" value="V_A-ATPase_B"/>
    <property type="match status" value="1"/>
</dbReference>
<dbReference type="Gene3D" id="3.40.50.12240">
    <property type="match status" value="1"/>
</dbReference>
<dbReference type="HAMAP" id="MF_00310">
    <property type="entry name" value="ATP_synth_B_arch"/>
    <property type="match status" value="1"/>
</dbReference>
<dbReference type="InterPro" id="IPR055190">
    <property type="entry name" value="ATP-synt_VA_C"/>
</dbReference>
<dbReference type="InterPro" id="IPR020003">
    <property type="entry name" value="ATPase_a/bsu_AS"/>
</dbReference>
<dbReference type="InterPro" id="IPR004100">
    <property type="entry name" value="ATPase_F1/V1/A1_a/bsu_N"/>
</dbReference>
<dbReference type="InterPro" id="IPR000194">
    <property type="entry name" value="ATPase_F1/V1/A1_a/bsu_nucl-bd"/>
</dbReference>
<dbReference type="InterPro" id="IPR027417">
    <property type="entry name" value="P-loop_NTPase"/>
</dbReference>
<dbReference type="InterPro" id="IPR022879">
    <property type="entry name" value="V-ATPase_su_B/beta"/>
</dbReference>
<dbReference type="NCBIfam" id="NF003235">
    <property type="entry name" value="PRK04196.1"/>
    <property type="match status" value="1"/>
</dbReference>
<dbReference type="PANTHER" id="PTHR43389">
    <property type="entry name" value="V-TYPE PROTON ATPASE SUBUNIT B"/>
    <property type="match status" value="1"/>
</dbReference>
<dbReference type="PANTHER" id="PTHR43389:SF4">
    <property type="entry name" value="V-TYPE PROTON ATPASE SUBUNIT B"/>
    <property type="match status" value="1"/>
</dbReference>
<dbReference type="Pfam" id="PF00006">
    <property type="entry name" value="ATP-synt_ab"/>
    <property type="match status" value="1"/>
</dbReference>
<dbReference type="Pfam" id="PF02874">
    <property type="entry name" value="ATP-synt_ab_N"/>
    <property type="match status" value="1"/>
</dbReference>
<dbReference type="Pfam" id="PF22919">
    <property type="entry name" value="ATP-synt_VA_C"/>
    <property type="match status" value="1"/>
</dbReference>
<dbReference type="PIRSF" id="PIRSF039114">
    <property type="entry name" value="V-ATPsynth_beta/V-ATPase_B"/>
    <property type="match status" value="1"/>
</dbReference>
<dbReference type="SUPFAM" id="SSF47917">
    <property type="entry name" value="C-terminal domain of alpha and beta subunits of F1 ATP synthase"/>
    <property type="match status" value="1"/>
</dbReference>
<dbReference type="SUPFAM" id="SSF52540">
    <property type="entry name" value="P-loop containing nucleoside triphosphate hydrolases"/>
    <property type="match status" value="1"/>
</dbReference>
<dbReference type="PROSITE" id="PS00152">
    <property type="entry name" value="ATPASE_ALPHA_BETA"/>
    <property type="match status" value="1"/>
</dbReference>
<proteinExistence type="inferred from homology"/>
<reference key="1">
    <citation type="journal article" date="2006" name="Genome Res.">
        <title>Skewed genomic variability in strains of the toxigenic bacterial pathogen, Clostridium perfringens.</title>
        <authorList>
            <person name="Myers G.S.A."/>
            <person name="Rasko D.A."/>
            <person name="Cheung J.K."/>
            <person name="Ravel J."/>
            <person name="Seshadri R."/>
            <person name="DeBoy R.T."/>
            <person name="Ren Q."/>
            <person name="Varga J."/>
            <person name="Awad M.M."/>
            <person name="Brinkac L.M."/>
            <person name="Daugherty S.C."/>
            <person name="Haft D.H."/>
            <person name="Dodson R.J."/>
            <person name="Madupu R."/>
            <person name="Nelson W.C."/>
            <person name="Rosovitz M.J."/>
            <person name="Sullivan S.A."/>
            <person name="Khouri H."/>
            <person name="Dimitrov G.I."/>
            <person name="Watkins K.L."/>
            <person name="Mulligan S."/>
            <person name="Benton J."/>
            <person name="Radune D."/>
            <person name="Fisher D.J."/>
            <person name="Atkins H.S."/>
            <person name="Hiscox T."/>
            <person name="Jost B.H."/>
            <person name="Billington S.J."/>
            <person name="Songer J.G."/>
            <person name="McClane B.A."/>
            <person name="Titball R.W."/>
            <person name="Rood J.I."/>
            <person name="Melville S.B."/>
            <person name="Paulsen I.T."/>
        </authorList>
    </citation>
    <scope>NUCLEOTIDE SEQUENCE [LARGE SCALE GENOMIC DNA]</scope>
    <source>
        <strain>ATCC 13124 / DSM 756 / JCM 1290 / NCIMB 6125 / NCTC 8237 / S 107 / Type A</strain>
    </source>
</reference>
<accession>Q0TPW8</accession>
<protein>
    <recommendedName>
        <fullName evidence="1">V-type ATP synthase beta chain</fullName>
    </recommendedName>
    <alternativeName>
        <fullName evidence="1">V-ATPase subunit B</fullName>
    </alternativeName>
</protein>
<organism>
    <name type="scientific">Clostridium perfringens (strain ATCC 13124 / DSM 756 / JCM 1290 / NCIMB 6125 / NCTC 8237 / Type A)</name>
    <dbReference type="NCBI Taxonomy" id="195103"/>
    <lineage>
        <taxon>Bacteria</taxon>
        <taxon>Bacillati</taxon>
        <taxon>Bacillota</taxon>
        <taxon>Clostridia</taxon>
        <taxon>Eubacteriales</taxon>
        <taxon>Clostridiaceae</taxon>
        <taxon>Clostridium</taxon>
    </lineage>
</organism>
<evidence type="ECO:0000255" key="1">
    <source>
        <dbReference type="HAMAP-Rule" id="MF_00310"/>
    </source>
</evidence>
<feature type="chain" id="PRO_0000322492" description="V-type ATP synthase beta chain">
    <location>
        <begin position="1"/>
        <end position="460"/>
    </location>
</feature>
<keyword id="KW-0066">ATP synthesis</keyword>
<keyword id="KW-0375">Hydrogen ion transport</keyword>
<keyword id="KW-0406">Ion transport</keyword>
<keyword id="KW-0813">Transport</keyword>
<gene>
    <name evidence="1" type="primary">atpB</name>
    <name type="ordered locus">CPF_1889</name>
</gene>
<comment type="function">
    <text evidence="1">Produces ATP from ADP in the presence of a proton gradient across the membrane. The V-type beta chain is a regulatory subunit.</text>
</comment>
<comment type="similarity">
    <text evidence="1">Belongs to the ATPase alpha/beta chains family.</text>
</comment>
<name>VATB_CLOP1</name>